<proteinExistence type="evidence at protein level"/>
<protein>
    <recommendedName>
        <fullName>Probable UDP-N-acetylglucosamine pyrophosphorylase</fullName>
        <ecNumber>2.7.7.23</ecNumber>
    </recommendedName>
</protein>
<keyword id="KW-0963">Cytoplasm</keyword>
<keyword id="KW-0548">Nucleotidyltransferase</keyword>
<keyword id="KW-0539">Nucleus</keyword>
<keyword id="KW-0597">Phosphoprotein</keyword>
<keyword id="KW-1185">Reference proteome</keyword>
<keyword id="KW-0808">Transferase</keyword>
<sequence length="475" mass="53121">MDDKELFDRSIFEETNQLHLYDQLNYLKKNDLQKFRKLLNQVQQLDLRSLWLKYRNAKATSQENRKLSPSEVGPLSIVDTSDSSWWRTGLREIARGHVAALVLAGGQGTRLGFAGPKGCFRLGLPNNPSIFELQAQKIKKSLALARAAFPDQEASISIPWYIMVSECTSEETISFFKENDFFGIDKKDVFFFQQGVLPCLDISGRVLFESDSSLAWAPNGNGGIYEALLSSGALNDMNRRGILHITAYSVDNVLVLPVDPVFIGMATTKKLEVATKTVEKIDPAEKVGLLVSSHNHPCVVEYSEISDEACKATENVDGHKHLLLRAANIAYHYFSFDFLQKASLHSSTLPIHLACKKIPFYDVTSHHYTTPLNPNGYKLESFIFDLFPSVSVENFGCFQVPRRTSFSPLKNSSKSPNDNHETCVNDILSLGKSWILKNGGILSPSDCTYVSPECSLQGESLEWIKGKQVSNCKLY</sequence>
<comment type="catalytic activity">
    <reaction>
        <text>N-acetyl-alpha-D-glucosamine 1-phosphate + UTP + H(+) = UDP-N-acetyl-alpha-D-glucosamine + diphosphate</text>
        <dbReference type="Rhea" id="RHEA:13509"/>
        <dbReference type="ChEBI" id="CHEBI:15378"/>
        <dbReference type="ChEBI" id="CHEBI:33019"/>
        <dbReference type="ChEBI" id="CHEBI:46398"/>
        <dbReference type="ChEBI" id="CHEBI:57705"/>
        <dbReference type="ChEBI" id="CHEBI:57776"/>
        <dbReference type="EC" id="2.7.7.23"/>
    </reaction>
</comment>
<comment type="pathway">
    <text>Nucleotide-sugar biosynthesis; UDP-N-acetyl-alpha-D-glucosamine biosynthesis; UDP-N-acetyl-alpha-D-glucosamine from N-acetyl-alpha-D-glucosamine 1-phosphate: step 1/1.</text>
</comment>
<comment type="subcellular location">
    <subcellularLocation>
        <location evidence="3">Cytoplasm</location>
    </subcellularLocation>
    <subcellularLocation>
        <location evidence="3">Nucleus</location>
    </subcellularLocation>
</comment>
<comment type="similarity">
    <text evidence="5">Belongs to the UDPGP type 1 family.</text>
</comment>
<feature type="chain" id="PRO_0000185772" description="Probable UDP-N-acetylglucosamine pyrophosphorylase">
    <location>
        <begin position="1"/>
        <end position="475"/>
    </location>
</feature>
<feature type="short sequence motif" description="Substrate binding" evidence="1">
    <location>
        <begin position="103"/>
        <end position="106"/>
    </location>
</feature>
<feature type="short sequence motif" description="Substrate binding" evidence="1">
    <location>
        <begin position="301"/>
        <end position="302"/>
    </location>
</feature>
<feature type="binding site" evidence="2">
    <location>
        <begin position="103"/>
        <end position="106"/>
    </location>
    <ligand>
        <name>UTP</name>
        <dbReference type="ChEBI" id="CHEBI:46398"/>
    </ligand>
</feature>
<feature type="binding site" evidence="2">
    <location>
        <position position="117"/>
    </location>
    <ligand>
        <name>UTP</name>
        <dbReference type="ChEBI" id="CHEBI:46398"/>
    </ligand>
</feature>
<feature type="binding site" evidence="2">
    <location>
        <position position="194"/>
    </location>
    <ligand>
        <name>UTP</name>
        <dbReference type="ChEBI" id="CHEBI:46398"/>
    </ligand>
</feature>
<feature type="binding site" evidence="2">
    <location>
        <position position="220"/>
    </location>
    <ligand>
        <name>UTP</name>
        <dbReference type="ChEBI" id="CHEBI:46398"/>
    </ligand>
</feature>
<feature type="binding site" evidence="1">
    <location>
        <position position="221"/>
    </location>
    <ligand>
        <name>substrate</name>
    </ligand>
</feature>
<feature type="binding site" evidence="2">
    <location>
        <position position="251"/>
    </location>
    <ligand>
        <name>UTP</name>
        <dbReference type="ChEBI" id="CHEBI:46398"/>
    </ligand>
</feature>
<feature type="binding site" evidence="2">
    <location>
        <position position="378"/>
    </location>
    <ligand>
        <name>UTP</name>
        <dbReference type="ChEBI" id="CHEBI:46398"/>
    </ligand>
</feature>
<feature type="binding site" evidence="1">
    <location>
        <position position="410"/>
    </location>
    <ligand>
        <name>substrate</name>
    </ligand>
</feature>
<feature type="modified residue" description="Phosphoserine" evidence="4">
    <location>
        <position position="405"/>
    </location>
</feature>
<accession>O94617</accession>
<reference key="1">
    <citation type="journal article" date="2002" name="Nature">
        <title>The genome sequence of Schizosaccharomyces pombe.</title>
        <authorList>
            <person name="Wood V."/>
            <person name="Gwilliam R."/>
            <person name="Rajandream M.A."/>
            <person name="Lyne M.H."/>
            <person name="Lyne R."/>
            <person name="Stewart A."/>
            <person name="Sgouros J.G."/>
            <person name="Peat N."/>
            <person name="Hayles J."/>
            <person name="Baker S.G."/>
            <person name="Basham D."/>
            <person name="Bowman S."/>
            <person name="Brooks K."/>
            <person name="Brown D."/>
            <person name="Brown S."/>
            <person name="Chillingworth T."/>
            <person name="Churcher C.M."/>
            <person name="Collins M."/>
            <person name="Connor R."/>
            <person name="Cronin A."/>
            <person name="Davis P."/>
            <person name="Feltwell T."/>
            <person name="Fraser A."/>
            <person name="Gentles S."/>
            <person name="Goble A."/>
            <person name="Hamlin N."/>
            <person name="Harris D.E."/>
            <person name="Hidalgo J."/>
            <person name="Hodgson G."/>
            <person name="Holroyd S."/>
            <person name="Hornsby T."/>
            <person name="Howarth S."/>
            <person name="Huckle E.J."/>
            <person name="Hunt S."/>
            <person name="Jagels K."/>
            <person name="James K.D."/>
            <person name="Jones L."/>
            <person name="Jones M."/>
            <person name="Leather S."/>
            <person name="McDonald S."/>
            <person name="McLean J."/>
            <person name="Mooney P."/>
            <person name="Moule S."/>
            <person name="Mungall K.L."/>
            <person name="Murphy L.D."/>
            <person name="Niblett D."/>
            <person name="Odell C."/>
            <person name="Oliver K."/>
            <person name="O'Neil S."/>
            <person name="Pearson D."/>
            <person name="Quail M.A."/>
            <person name="Rabbinowitsch E."/>
            <person name="Rutherford K.M."/>
            <person name="Rutter S."/>
            <person name="Saunders D."/>
            <person name="Seeger K."/>
            <person name="Sharp S."/>
            <person name="Skelton J."/>
            <person name="Simmonds M.N."/>
            <person name="Squares R."/>
            <person name="Squares S."/>
            <person name="Stevens K."/>
            <person name="Taylor K."/>
            <person name="Taylor R.G."/>
            <person name="Tivey A."/>
            <person name="Walsh S.V."/>
            <person name="Warren T."/>
            <person name="Whitehead S."/>
            <person name="Woodward J.R."/>
            <person name="Volckaert G."/>
            <person name="Aert R."/>
            <person name="Robben J."/>
            <person name="Grymonprez B."/>
            <person name="Weltjens I."/>
            <person name="Vanstreels E."/>
            <person name="Rieger M."/>
            <person name="Schaefer M."/>
            <person name="Mueller-Auer S."/>
            <person name="Gabel C."/>
            <person name="Fuchs M."/>
            <person name="Duesterhoeft A."/>
            <person name="Fritzc C."/>
            <person name="Holzer E."/>
            <person name="Moestl D."/>
            <person name="Hilbert H."/>
            <person name="Borzym K."/>
            <person name="Langer I."/>
            <person name="Beck A."/>
            <person name="Lehrach H."/>
            <person name="Reinhardt R."/>
            <person name="Pohl T.M."/>
            <person name="Eger P."/>
            <person name="Zimmermann W."/>
            <person name="Wedler H."/>
            <person name="Wambutt R."/>
            <person name="Purnelle B."/>
            <person name="Goffeau A."/>
            <person name="Cadieu E."/>
            <person name="Dreano S."/>
            <person name="Gloux S."/>
            <person name="Lelaure V."/>
            <person name="Mottier S."/>
            <person name="Galibert F."/>
            <person name="Aves S.J."/>
            <person name="Xiang Z."/>
            <person name="Hunt C."/>
            <person name="Moore K."/>
            <person name="Hurst S.M."/>
            <person name="Lucas M."/>
            <person name="Rochet M."/>
            <person name="Gaillardin C."/>
            <person name="Tallada V.A."/>
            <person name="Garzon A."/>
            <person name="Thode G."/>
            <person name="Daga R.R."/>
            <person name="Cruzado L."/>
            <person name="Jimenez J."/>
            <person name="Sanchez M."/>
            <person name="del Rey F."/>
            <person name="Benito J."/>
            <person name="Dominguez A."/>
            <person name="Revuelta J.L."/>
            <person name="Moreno S."/>
            <person name="Armstrong J."/>
            <person name="Forsburg S.L."/>
            <person name="Cerutti L."/>
            <person name="Lowe T."/>
            <person name="McCombie W.R."/>
            <person name="Paulsen I."/>
            <person name="Potashkin J."/>
            <person name="Shpakovski G.V."/>
            <person name="Ussery D."/>
            <person name="Barrell B.G."/>
            <person name="Nurse P."/>
        </authorList>
    </citation>
    <scope>NUCLEOTIDE SEQUENCE [LARGE SCALE GENOMIC DNA]</scope>
    <source>
        <strain>972 / ATCC 24843</strain>
    </source>
</reference>
<reference key="2">
    <citation type="journal article" date="2006" name="Nat. Biotechnol.">
        <title>ORFeome cloning and global analysis of protein localization in the fission yeast Schizosaccharomyces pombe.</title>
        <authorList>
            <person name="Matsuyama A."/>
            <person name="Arai R."/>
            <person name="Yashiroda Y."/>
            <person name="Shirai A."/>
            <person name="Kamata A."/>
            <person name="Sekido S."/>
            <person name="Kobayashi Y."/>
            <person name="Hashimoto A."/>
            <person name="Hamamoto M."/>
            <person name="Hiraoka Y."/>
            <person name="Horinouchi S."/>
            <person name="Yoshida M."/>
        </authorList>
    </citation>
    <scope>SUBCELLULAR LOCATION [LARGE SCALE ANALYSIS]</scope>
</reference>
<reference key="3">
    <citation type="journal article" date="2008" name="J. Proteome Res.">
        <title>Phosphoproteome analysis of fission yeast.</title>
        <authorList>
            <person name="Wilson-Grady J.T."/>
            <person name="Villen J."/>
            <person name="Gygi S.P."/>
        </authorList>
    </citation>
    <scope>PHOSPHORYLATION [LARGE SCALE ANALYSIS] AT SER-405</scope>
    <scope>IDENTIFICATION BY MASS SPECTROMETRY</scope>
</reference>
<dbReference type="EC" id="2.7.7.23"/>
<dbReference type="EMBL" id="CU329671">
    <property type="protein sequence ID" value="CAB38688.1"/>
    <property type="molecule type" value="Genomic_DNA"/>
</dbReference>
<dbReference type="PIR" id="T39359">
    <property type="entry name" value="T39359"/>
</dbReference>
<dbReference type="RefSeq" id="NP_596832.1">
    <property type="nucleotide sequence ID" value="NM_001023853.2"/>
</dbReference>
<dbReference type="SMR" id="O94617"/>
<dbReference type="FunCoup" id="O94617">
    <property type="interactions" value="163"/>
</dbReference>
<dbReference type="STRING" id="284812.O94617"/>
<dbReference type="iPTMnet" id="O94617"/>
<dbReference type="PaxDb" id="4896-SPBC1289.08.1"/>
<dbReference type="EnsemblFungi" id="SPBC1289.08.1">
    <property type="protein sequence ID" value="SPBC1289.08.1:pep"/>
    <property type="gene ID" value="SPBC1289.08"/>
</dbReference>
<dbReference type="GeneID" id="2540183"/>
<dbReference type="KEGG" id="spo:2540183"/>
<dbReference type="PomBase" id="SPBC1289.08">
    <property type="gene designation" value="uap1"/>
</dbReference>
<dbReference type="VEuPathDB" id="FungiDB:SPBC1289.08"/>
<dbReference type="eggNOG" id="KOG2388">
    <property type="taxonomic scope" value="Eukaryota"/>
</dbReference>
<dbReference type="HOGENOM" id="CLU_025603_1_1_1"/>
<dbReference type="InParanoid" id="O94617"/>
<dbReference type="OMA" id="THCTVPW"/>
<dbReference type="PhylomeDB" id="O94617"/>
<dbReference type="Reactome" id="R-SPO-446210">
    <property type="pathway name" value="Synthesis of UDP-N-acetyl-glucosamine"/>
</dbReference>
<dbReference type="UniPathway" id="UPA00113">
    <property type="reaction ID" value="UER00533"/>
</dbReference>
<dbReference type="PRO" id="PR:O94617"/>
<dbReference type="Proteomes" id="UP000002485">
    <property type="component" value="Chromosome II"/>
</dbReference>
<dbReference type="GO" id="GO:0005829">
    <property type="term" value="C:cytosol"/>
    <property type="evidence" value="ECO:0007005"/>
    <property type="project" value="PomBase"/>
</dbReference>
<dbReference type="GO" id="GO:0005634">
    <property type="term" value="C:nucleus"/>
    <property type="evidence" value="ECO:0007005"/>
    <property type="project" value="PomBase"/>
</dbReference>
<dbReference type="GO" id="GO:0003977">
    <property type="term" value="F:UDP-N-acetylglucosamine diphosphorylase activity"/>
    <property type="evidence" value="ECO:0000318"/>
    <property type="project" value="GO_Central"/>
</dbReference>
<dbReference type="GO" id="GO:0006048">
    <property type="term" value="P:UDP-N-acetylglucosamine biosynthetic process"/>
    <property type="evidence" value="ECO:0000318"/>
    <property type="project" value="GO_Central"/>
</dbReference>
<dbReference type="CDD" id="cd04193">
    <property type="entry name" value="UDPGlcNAc_PPase"/>
    <property type="match status" value="1"/>
</dbReference>
<dbReference type="Gene3D" id="3.90.550.10">
    <property type="entry name" value="Spore Coat Polysaccharide Biosynthesis Protein SpsA, Chain A"/>
    <property type="match status" value="1"/>
</dbReference>
<dbReference type="InterPro" id="IPR029044">
    <property type="entry name" value="Nucleotide-diphossugar_trans"/>
</dbReference>
<dbReference type="InterPro" id="IPR039741">
    <property type="entry name" value="UDP-sugar_pyrophosphorylase"/>
</dbReference>
<dbReference type="InterPro" id="IPR002618">
    <property type="entry name" value="UDPGP_fam"/>
</dbReference>
<dbReference type="PANTHER" id="PTHR11952:SF2">
    <property type="entry name" value="LD24639P"/>
    <property type="match status" value="1"/>
</dbReference>
<dbReference type="PANTHER" id="PTHR11952">
    <property type="entry name" value="UDP- GLUCOSE PYROPHOSPHORYLASE"/>
    <property type="match status" value="1"/>
</dbReference>
<dbReference type="Pfam" id="PF01704">
    <property type="entry name" value="UDPGP"/>
    <property type="match status" value="1"/>
</dbReference>
<dbReference type="SUPFAM" id="SSF53448">
    <property type="entry name" value="Nucleotide-diphospho-sugar transferases"/>
    <property type="match status" value="1"/>
</dbReference>
<name>UAP1_SCHPO</name>
<organism>
    <name type="scientific">Schizosaccharomyces pombe (strain 972 / ATCC 24843)</name>
    <name type="common">Fission yeast</name>
    <dbReference type="NCBI Taxonomy" id="284812"/>
    <lineage>
        <taxon>Eukaryota</taxon>
        <taxon>Fungi</taxon>
        <taxon>Dikarya</taxon>
        <taxon>Ascomycota</taxon>
        <taxon>Taphrinomycotina</taxon>
        <taxon>Schizosaccharomycetes</taxon>
        <taxon>Schizosaccharomycetales</taxon>
        <taxon>Schizosaccharomycetaceae</taxon>
        <taxon>Schizosaccharomyces</taxon>
    </lineage>
</organism>
<evidence type="ECO:0000250" key="1"/>
<evidence type="ECO:0000250" key="2">
    <source>
        <dbReference type="UniProtKB" id="Q9M9P3"/>
    </source>
</evidence>
<evidence type="ECO:0000269" key="3">
    <source>
    </source>
</evidence>
<evidence type="ECO:0000269" key="4">
    <source>
    </source>
</evidence>
<evidence type="ECO:0000305" key="5"/>
<gene>
    <name type="primary">uap1</name>
    <name type="synonym">qri1</name>
    <name type="ORF">SPBC1289.08</name>
</gene>